<keyword id="KW-0028">Amino-acid biosynthesis</keyword>
<keyword id="KW-0057">Aromatic amino acid biosynthesis</keyword>
<keyword id="KW-1185">Reference proteome</keyword>
<keyword id="KW-0808">Transferase</keyword>
<organism>
    <name type="scientific">Haemophilus influenzae (strain ATCC 51907 / DSM 11121 / KW20 / Rd)</name>
    <dbReference type="NCBI Taxonomy" id="71421"/>
    <lineage>
        <taxon>Bacteria</taxon>
        <taxon>Pseudomonadati</taxon>
        <taxon>Pseudomonadota</taxon>
        <taxon>Gammaproteobacteria</taxon>
        <taxon>Pasteurellales</taxon>
        <taxon>Pasteurellaceae</taxon>
        <taxon>Haemophilus</taxon>
    </lineage>
</organism>
<gene>
    <name type="primary">aroG</name>
    <name type="ordered locus">HI_1547</name>
</gene>
<protein>
    <recommendedName>
        <fullName>Phospho-2-dehydro-3-deoxyheptonate aldolase</fullName>
        <ecNumber>2.5.1.54</ecNumber>
    </recommendedName>
    <alternativeName>
        <fullName>3-deoxy-D-arabino-heptulosonate 7-phosphate synthase</fullName>
    </alternativeName>
    <alternativeName>
        <fullName>DAHP synthase</fullName>
    </alternativeName>
    <alternativeName>
        <fullName>Phospho-2-keto-3-deoxyheptonate aldolase</fullName>
    </alternativeName>
</protein>
<dbReference type="EC" id="2.5.1.54"/>
<dbReference type="EMBL" id="L42023">
    <property type="protein sequence ID" value="AAC23197.1"/>
    <property type="molecule type" value="Genomic_DNA"/>
</dbReference>
<dbReference type="PIR" id="I64128">
    <property type="entry name" value="I64128"/>
</dbReference>
<dbReference type="RefSeq" id="NP_439696.1">
    <property type="nucleotide sequence ID" value="NC_000907.1"/>
</dbReference>
<dbReference type="SMR" id="P44303"/>
<dbReference type="STRING" id="71421.HI_1547"/>
<dbReference type="EnsemblBacteria" id="AAC23197">
    <property type="protein sequence ID" value="AAC23197"/>
    <property type="gene ID" value="HI_1547"/>
</dbReference>
<dbReference type="KEGG" id="hin:HI_1547"/>
<dbReference type="PATRIC" id="fig|71421.8.peg.1618"/>
<dbReference type="eggNOG" id="COG0722">
    <property type="taxonomic scope" value="Bacteria"/>
</dbReference>
<dbReference type="HOGENOM" id="CLU_030903_0_1_6"/>
<dbReference type="OrthoDB" id="9807331at2"/>
<dbReference type="PhylomeDB" id="P44303"/>
<dbReference type="BioCyc" id="HINF71421:G1GJ1-1567-MONOMER"/>
<dbReference type="UniPathway" id="UPA00053">
    <property type="reaction ID" value="UER00084"/>
</dbReference>
<dbReference type="Proteomes" id="UP000000579">
    <property type="component" value="Chromosome"/>
</dbReference>
<dbReference type="GO" id="GO:0005737">
    <property type="term" value="C:cytoplasm"/>
    <property type="evidence" value="ECO:0000318"/>
    <property type="project" value="GO_Central"/>
</dbReference>
<dbReference type="GO" id="GO:0003849">
    <property type="term" value="F:3-deoxy-7-phosphoheptulonate synthase activity"/>
    <property type="evidence" value="ECO:0000318"/>
    <property type="project" value="GO_Central"/>
</dbReference>
<dbReference type="GO" id="GO:0008652">
    <property type="term" value="P:amino acid biosynthetic process"/>
    <property type="evidence" value="ECO:0007669"/>
    <property type="project" value="UniProtKB-KW"/>
</dbReference>
<dbReference type="GO" id="GO:0009073">
    <property type="term" value="P:aromatic amino acid family biosynthetic process"/>
    <property type="evidence" value="ECO:0000318"/>
    <property type="project" value="GO_Central"/>
</dbReference>
<dbReference type="GO" id="GO:0009423">
    <property type="term" value="P:chorismate biosynthetic process"/>
    <property type="evidence" value="ECO:0007669"/>
    <property type="project" value="UniProtKB-UniPathway"/>
</dbReference>
<dbReference type="FunFam" id="3.20.20.70:FF:000005">
    <property type="entry name" value="Phospho-2-dehydro-3-deoxyheptonate aldolase"/>
    <property type="match status" value="1"/>
</dbReference>
<dbReference type="Gene3D" id="3.20.20.70">
    <property type="entry name" value="Aldolase class I"/>
    <property type="match status" value="1"/>
</dbReference>
<dbReference type="InterPro" id="IPR013785">
    <property type="entry name" value="Aldolase_TIM"/>
</dbReference>
<dbReference type="InterPro" id="IPR006218">
    <property type="entry name" value="DAHP1/KDSA"/>
</dbReference>
<dbReference type="InterPro" id="IPR006219">
    <property type="entry name" value="DAHP_synth_1"/>
</dbReference>
<dbReference type="NCBIfam" id="TIGR00034">
    <property type="entry name" value="aroFGH"/>
    <property type="match status" value="1"/>
</dbReference>
<dbReference type="NCBIfam" id="NF006723">
    <property type="entry name" value="PRK09261.1-1"/>
    <property type="match status" value="1"/>
</dbReference>
<dbReference type="NCBIfam" id="NF009395">
    <property type="entry name" value="PRK12755.1"/>
    <property type="match status" value="1"/>
</dbReference>
<dbReference type="NCBIfam" id="NF009396">
    <property type="entry name" value="PRK12756.1"/>
    <property type="match status" value="1"/>
</dbReference>
<dbReference type="PANTHER" id="PTHR21225">
    <property type="entry name" value="PHOSPHO-2-DEHYDRO-3-DEOXYHEPTONATE ALDOLASE DAHP SYNTHETASE"/>
    <property type="match status" value="1"/>
</dbReference>
<dbReference type="PANTHER" id="PTHR21225:SF12">
    <property type="entry name" value="PHOSPHO-2-DEHYDRO-3-DEOXYHEPTONATE ALDOLASE, TYROSINE-INHIBITED"/>
    <property type="match status" value="1"/>
</dbReference>
<dbReference type="Pfam" id="PF00793">
    <property type="entry name" value="DAHP_synth_1"/>
    <property type="match status" value="1"/>
</dbReference>
<dbReference type="PIRSF" id="PIRSF001361">
    <property type="entry name" value="DAHP_synthase"/>
    <property type="match status" value="1"/>
</dbReference>
<dbReference type="SUPFAM" id="SSF51569">
    <property type="entry name" value="Aldolase"/>
    <property type="match status" value="1"/>
</dbReference>
<sequence>MAKEKIEIVVANDDTRIEKVDQVLPPIALLEKYPASEQAAALVKQTRHEAHNIIHGKDDRLLVVIGPCSIHDPKAAIEYATRLKPLREKYKDSLEIIMRVYFEKPRTTVGWKGLINEPYLNDTYRLNDGLRIARKLLSDINDLGVPAAGEFLDMITPQYLADFMSWGAIGARTTESQVHRELASGLSCAVGFKNATNGGVKVALDAIGAAEAPHYFLSVTKFGHSAIVSTKGNEDCHIILRGGDKGPNYSAEDVEKVCADIEKTGRIPHVMVDFSHANSSKQYKKQMDVCQDVCNQIAFGSKQIFGVMVESHLVEGRQDLVDGKAQTYGQSITDACIGWEDSERLLQQLSDAVIARRKATSN</sequence>
<evidence type="ECO:0000305" key="1"/>
<comment type="function">
    <text>Stereospecific condensation of phosphoenolpyruvate (PEP) and D-erythrose-4-phosphate (E4P) giving rise to 3-deoxy-D-arabino-heptulosonate-7-phosphate (DAHP).</text>
</comment>
<comment type="catalytic activity">
    <reaction>
        <text>D-erythrose 4-phosphate + phosphoenolpyruvate + H2O = 7-phospho-2-dehydro-3-deoxy-D-arabino-heptonate + phosphate</text>
        <dbReference type="Rhea" id="RHEA:14717"/>
        <dbReference type="ChEBI" id="CHEBI:15377"/>
        <dbReference type="ChEBI" id="CHEBI:16897"/>
        <dbReference type="ChEBI" id="CHEBI:43474"/>
        <dbReference type="ChEBI" id="CHEBI:58394"/>
        <dbReference type="ChEBI" id="CHEBI:58702"/>
        <dbReference type="EC" id="2.5.1.54"/>
    </reaction>
</comment>
<comment type="pathway">
    <text>Metabolic intermediate biosynthesis; chorismate biosynthesis; chorismate from D-erythrose 4-phosphate and phosphoenolpyruvate: step 1/7.</text>
</comment>
<comment type="similarity">
    <text evidence="1">Belongs to the class-I DAHP synthase family.</text>
</comment>
<name>AROG_HAEIN</name>
<reference key="1">
    <citation type="journal article" date="1995" name="Science">
        <title>Whole-genome random sequencing and assembly of Haemophilus influenzae Rd.</title>
        <authorList>
            <person name="Fleischmann R.D."/>
            <person name="Adams M.D."/>
            <person name="White O."/>
            <person name="Clayton R.A."/>
            <person name="Kirkness E.F."/>
            <person name="Kerlavage A.R."/>
            <person name="Bult C.J."/>
            <person name="Tomb J.-F."/>
            <person name="Dougherty B.A."/>
            <person name="Merrick J.M."/>
            <person name="McKenney K."/>
            <person name="Sutton G.G."/>
            <person name="FitzHugh W."/>
            <person name="Fields C.A."/>
            <person name="Gocayne J.D."/>
            <person name="Scott J.D."/>
            <person name="Shirley R."/>
            <person name="Liu L.-I."/>
            <person name="Glodek A."/>
            <person name="Kelley J.M."/>
            <person name="Weidman J.F."/>
            <person name="Phillips C.A."/>
            <person name="Spriggs T."/>
            <person name="Hedblom E."/>
            <person name="Cotton M.D."/>
            <person name="Utterback T.R."/>
            <person name="Hanna M.C."/>
            <person name="Nguyen D.T."/>
            <person name="Saudek D.M."/>
            <person name="Brandon R.C."/>
            <person name="Fine L.D."/>
            <person name="Fritchman J.L."/>
            <person name="Fuhrmann J.L."/>
            <person name="Geoghagen N.S.M."/>
            <person name="Gnehm C.L."/>
            <person name="McDonald L.A."/>
            <person name="Small K.V."/>
            <person name="Fraser C.M."/>
            <person name="Smith H.O."/>
            <person name="Venter J.C."/>
        </authorList>
    </citation>
    <scope>NUCLEOTIDE SEQUENCE [LARGE SCALE GENOMIC DNA]</scope>
    <source>
        <strain>ATCC 51907 / DSM 11121 / KW20 / Rd</strain>
    </source>
</reference>
<accession>P44303</accession>
<proteinExistence type="inferred from homology"/>
<feature type="chain" id="PRO_0000140830" description="Phospho-2-dehydro-3-deoxyheptonate aldolase">
    <location>
        <begin position="1"/>
        <end position="362"/>
    </location>
</feature>